<sequence length="408" mass="43881">MSPCENDTPINWKRNLIVAWLGCFLTGAAFSLVMPFLPLYVEQLGVTGHSALNMWSGIVFSITFLFSAIASPFWGGLADRKGRKLMLLRSALGMGIVMVLMGLAQNIWQFLILRALLGLLGGFVPNANALIATQVPRNKSGWALGTLSTGGVSGALLGPMAGGLLADSYGLRPVFFITASVLILCFFVTLFCIREKFQPVSKKEMLHMREVVTSLKNPKLVLSLFVTTLIIQVATGSIAPILTLYVRELAGNVSNVAFISGMIASVPGVAALLSAPRLGKLGDRIGPEKILITALIFSVLLLIPMSYVQTPLQLGILRFLLGAADGALLPAVQTLLVYNSSNQIAGRIFSYNQSFRDIGNVTGPLMGAAISANYGFRAVFLVTAGVVLFNAVYSWNSLRRRRIPQISN</sequence>
<evidence type="ECO:0000255" key="1">
    <source>
        <dbReference type="HAMAP-Rule" id="MF_01528"/>
    </source>
</evidence>
<organism>
    <name type="scientific">Escherichia coli (strain UTI89 / UPEC)</name>
    <dbReference type="NCBI Taxonomy" id="364106"/>
    <lineage>
        <taxon>Bacteria</taxon>
        <taxon>Pseudomonadati</taxon>
        <taxon>Pseudomonadota</taxon>
        <taxon>Gammaproteobacteria</taxon>
        <taxon>Enterobacterales</taxon>
        <taxon>Enterobacteriaceae</taxon>
        <taxon>Escherichia</taxon>
    </lineage>
</organism>
<feature type="chain" id="PRO_0000280210" description="Multidrug resistance protein MdtG">
    <location>
        <begin position="1"/>
        <end position="408"/>
    </location>
</feature>
<feature type="transmembrane region" description="Helical" evidence="1">
    <location>
        <begin position="16"/>
        <end position="36"/>
    </location>
</feature>
<feature type="transmembrane region" description="Helical" evidence="1">
    <location>
        <begin position="58"/>
        <end position="78"/>
    </location>
</feature>
<feature type="transmembrane region" description="Helical" evidence="1">
    <location>
        <begin position="92"/>
        <end position="112"/>
    </location>
</feature>
<feature type="transmembrane region" description="Helical" evidence="1">
    <location>
        <begin position="115"/>
        <end position="135"/>
    </location>
</feature>
<feature type="transmembrane region" description="Helical" evidence="1">
    <location>
        <begin position="146"/>
        <end position="166"/>
    </location>
</feature>
<feature type="transmembrane region" description="Helical" evidence="1">
    <location>
        <begin position="173"/>
        <end position="193"/>
    </location>
</feature>
<feature type="transmembrane region" description="Helical" evidence="1">
    <location>
        <begin position="224"/>
        <end position="244"/>
    </location>
</feature>
<feature type="transmembrane region" description="Helical" evidence="1">
    <location>
        <begin position="256"/>
        <end position="276"/>
    </location>
</feature>
<feature type="transmembrane region" description="Helical" evidence="1">
    <location>
        <begin position="290"/>
        <end position="310"/>
    </location>
</feature>
<feature type="transmembrane region" description="Helical" evidence="1">
    <location>
        <begin position="319"/>
        <end position="339"/>
    </location>
</feature>
<feature type="transmembrane region" description="Helical" evidence="1">
    <location>
        <begin position="378"/>
        <end position="398"/>
    </location>
</feature>
<dbReference type="EMBL" id="CP000243">
    <property type="protein sequence ID" value="ABE06659.1"/>
    <property type="molecule type" value="Genomic_DNA"/>
</dbReference>
<dbReference type="RefSeq" id="WP_000074171.1">
    <property type="nucleotide sequence ID" value="NZ_CP064825.1"/>
</dbReference>
<dbReference type="SMR" id="Q1RDA5"/>
<dbReference type="KEGG" id="eci:UTI89_C1177"/>
<dbReference type="HOGENOM" id="CLU_001265_57_3_6"/>
<dbReference type="Proteomes" id="UP000001952">
    <property type="component" value="Chromosome"/>
</dbReference>
<dbReference type="GO" id="GO:0005886">
    <property type="term" value="C:plasma membrane"/>
    <property type="evidence" value="ECO:0007669"/>
    <property type="project" value="UniProtKB-SubCell"/>
</dbReference>
<dbReference type="GO" id="GO:0022857">
    <property type="term" value="F:transmembrane transporter activity"/>
    <property type="evidence" value="ECO:0007669"/>
    <property type="project" value="UniProtKB-UniRule"/>
</dbReference>
<dbReference type="GO" id="GO:0046677">
    <property type="term" value="P:response to antibiotic"/>
    <property type="evidence" value="ECO:0007669"/>
    <property type="project" value="UniProtKB-KW"/>
</dbReference>
<dbReference type="CDD" id="cd17391">
    <property type="entry name" value="MFS_MdtG_MDR_like"/>
    <property type="match status" value="1"/>
</dbReference>
<dbReference type="FunFam" id="1.20.1250.20:FF:000020">
    <property type="entry name" value="Multidrug resistance protein MdtG"/>
    <property type="match status" value="1"/>
</dbReference>
<dbReference type="FunFam" id="1.20.1250.20:FF:000022">
    <property type="entry name" value="Multidrug resistance protein MdtG"/>
    <property type="match status" value="1"/>
</dbReference>
<dbReference type="Gene3D" id="1.20.1250.20">
    <property type="entry name" value="MFS general substrate transporter like domains"/>
    <property type="match status" value="2"/>
</dbReference>
<dbReference type="HAMAP" id="MF_01528">
    <property type="entry name" value="MFS_MdtG"/>
    <property type="match status" value="1"/>
</dbReference>
<dbReference type="InterPro" id="IPR011701">
    <property type="entry name" value="MFS"/>
</dbReference>
<dbReference type="InterPro" id="IPR020846">
    <property type="entry name" value="MFS_dom"/>
</dbReference>
<dbReference type="InterPro" id="IPR050497">
    <property type="entry name" value="MFS_MdtG_subfamily"/>
</dbReference>
<dbReference type="InterPro" id="IPR036259">
    <property type="entry name" value="MFS_trans_sf"/>
</dbReference>
<dbReference type="InterPro" id="IPR023692">
    <property type="entry name" value="Mutidrug-R_MdtG"/>
</dbReference>
<dbReference type="InterPro" id="IPR001958">
    <property type="entry name" value="Tet-R_TetA/multi-R_MdtG-like"/>
</dbReference>
<dbReference type="NCBIfam" id="NF007372">
    <property type="entry name" value="PRK09874.1"/>
    <property type="match status" value="1"/>
</dbReference>
<dbReference type="PANTHER" id="PTHR43414">
    <property type="entry name" value="MULTIDRUG RESISTANCE PROTEIN MDTG"/>
    <property type="match status" value="1"/>
</dbReference>
<dbReference type="PANTHER" id="PTHR43414:SF6">
    <property type="entry name" value="MULTIDRUG RESISTANCE PROTEIN MDTG"/>
    <property type="match status" value="1"/>
</dbReference>
<dbReference type="Pfam" id="PF07690">
    <property type="entry name" value="MFS_1"/>
    <property type="match status" value="1"/>
</dbReference>
<dbReference type="PRINTS" id="PR01035">
    <property type="entry name" value="TCRTETA"/>
</dbReference>
<dbReference type="SUPFAM" id="SSF103473">
    <property type="entry name" value="MFS general substrate transporter"/>
    <property type="match status" value="1"/>
</dbReference>
<dbReference type="PROSITE" id="PS50850">
    <property type="entry name" value="MFS"/>
    <property type="match status" value="1"/>
</dbReference>
<reference key="1">
    <citation type="journal article" date="2006" name="Proc. Natl. Acad. Sci. U.S.A.">
        <title>Identification of genes subject to positive selection in uropathogenic strains of Escherichia coli: a comparative genomics approach.</title>
        <authorList>
            <person name="Chen S.L."/>
            <person name="Hung C.-S."/>
            <person name="Xu J."/>
            <person name="Reigstad C.S."/>
            <person name="Magrini V."/>
            <person name="Sabo A."/>
            <person name="Blasiar D."/>
            <person name="Bieri T."/>
            <person name="Meyer R.R."/>
            <person name="Ozersky P."/>
            <person name="Armstrong J.R."/>
            <person name="Fulton R.S."/>
            <person name="Latreille J.P."/>
            <person name="Spieth J."/>
            <person name="Hooton T.M."/>
            <person name="Mardis E.R."/>
            <person name="Hultgren S.J."/>
            <person name="Gordon J.I."/>
        </authorList>
    </citation>
    <scope>NUCLEOTIDE SEQUENCE [LARGE SCALE GENOMIC DNA]</scope>
    <source>
        <strain>UTI89 / UPEC</strain>
    </source>
</reference>
<name>MDTG_ECOUT</name>
<proteinExistence type="inferred from homology"/>
<accession>Q1RDA5</accession>
<keyword id="KW-0046">Antibiotic resistance</keyword>
<keyword id="KW-0997">Cell inner membrane</keyword>
<keyword id="KW-1003">Cell membrane</keyword>
<keyword id="KW-0472">Membrane</keyword>
<keyword id="KW-0812">Transmembrane</keyword>
<keyword id="KW-1133">Transmembrane helix</keyword>
<keyword id="KW-0813">Transport</keyword>
<comment type="function">
    <text evidence="1">Confers resistance to fosfomycin and deoxycholate.</text>
</comment>
<comment type="subcellular location">
    <subcellularLocation>
        <location evidence="1">Cell inner membrane</location>
        <topology evidence="1">Multi-pass membrane protein</topology>
    </subcellularLocation>
</comment>
<comment type="similarity">
    <text evidence="1">Belongs to the major facilitator superfamily. DHA1 family. MdtG (TC 2.A.1.2.20) subfamily.</text>
</comment>
<gene>
    <name evidence="1" type="primary">mdtG</name>
    <name type="ordered locus">UTI89_C1177</name>
</gene>
<protein>
    <recommendedName>
        <fullName evidence="1">Multidrug resistance protein MdtG</fullName>
    </recommendedName>
</protein>